<proteinExistence type="inferred from homology"/>
<keyword id="KW-0067">ATP-binding</keyword>
<keyword id="KW-0347">Helicase</keyword>
<keyword id="KW-0378">Hydrolase</keyword>
<keyword id="KW-0547">Nucleotide-binding</keyword>
<keyword id="KW-0539">Nucleus</keyword>
<keyword id="KW-1185">Reference proteome</keyword>
<keyword id="KW-0690">Ribosome biogenesis</keyword>
<keyword id="KW-0694">RNA-binding</keyword>
<keyword id="KW-0698">rRNA processing</keyword>
<comment type="function">
    <text evidence="1">ATP-dependent RNA helicase required for 60S ribosomal subunit synthesis. Involved in efficient pre-rRNA processing, predominantly at site A3, which is necessary for the normal formation of 25S and 5.8S rRNAs (By similarity).</text>
</comment>
<comment type="catalytic activity">
    <reaction>
        <text>ATP + H2O = ADP + phosphate + H(+)</text>
        <dbReference type="Rhea" id="RHEA:13065"/>
        <dbReference type="ChEBI" id="CHEBI:15377"/>
        <dbReference type="ChEBI" id="CHEBI:15378"/>
        <dbReference type="ChEBI" id="CHEBI:30616"/>
        <dbReference type="ChEBI" id="CHEBI:43474"/>
        <dbReference type="ChEBI" id="CHEBI:456216"/>
        <dbReference type="EC" id="3.6.4.13"/>
    </reaction>
</comment>
<comment type="subcellular location">
    <subcellularLocation>
        <location evidence="1">Nucleus</location>
        <location evidence="1">Nucleolus</location>
    </subcellularLocation>
</comment>
<comment type="domain">
    <text>The Q motif is unique to and characteristic of the DEAD box family of RNA helicases and controls ATP binding and hydrolysis.</text>
</comment>
<comment type="similarity">
    <text evidence="5">Belongs to the DEAD box helicase family. DDX5/DBP2 subfamily.</text>
</comment>
<comment type="sequence caution" evidence="5">
    <conflict type="erroneous gene model prediction">
        <sequence resource="EMBL-CDS" id="CBF79353"/>
    </conflict>
</comment>
<comment type="sequence caution" evidence="5">
    <conflict type="erroneous gene model prediction">
        <sequence resource="EMBL-CDS" id="EAA62004"/>
    </conflict>
</comment>
<reference key="1">
    <citation type="journal article" date="2005" name="Nature">
        <title>Sequencing of Aspergillus nidulans and comparative analysis with A. fumigatus and A. oryzae.</title>
        <authorList>
            <person name="Galagan J.E."/>
            <person name="Calvo S.E."/>
            <person name="Cuomo C."/>
            <person name="Ma L.-J."/>
            <person name="Wortman J.R."/>
            <person name="Batzoglou S."/>
            <person name="Lee S.-I."/>
            <person name="Bastuerkmen M."/>
            <person name="Spevak C.C."/>
            <person name="Clutterbuck J."/>
            <person name="Kapitonov V."/>
            <person name="Jurka J."/>
            <person name="Scazzocchio C."/>
            <person name="Farman M.L."/>
            <person name="Butler J."/>
            <person name="Purcell S."/>
            <person name="Harris S."/>
            <person name="Braus G.H."/>
            <person name="Draht O."/>
            <person name="Busch S."/>
            <person name="D'Enfert C."/>
            <person name="Bouchier C."/>
            <person name="Goldman G.H."/>
            <person name="Bell-Pedersen D."/>
            <person name="Griffiths-Jones S."/>
            <person name="Doonan J.H."/>
            <person name="Yu J."/>
            <person name="Vienken K."/>
            <person name="Pain A."/>
            <person name="Freitag M."/>
            <person name="Selker E.U."/>
            <person name="Archer D.B."/>
            <person name="Penalva M.A."/>
            <person name="Oakley B.R."/>
            <person name="Momany M."/>
            <person name="Tanaka T."/>
            <person name="Kumagai T."/>
            <person name="Asai K."/>
            <person name="Machida M."/>
            <person name="Nierman W.C."/>
            <person name="Denning D.W."/>
            <person name="Caddick M.X."/>
            <person name="Hynes M."/>
            <person name="Paoletti M."/>
            <person name="Fischer R."/>
            <person name="Miller B.L."/>
            <person name="Dyer P.S."/>
            <person name="Sachs M.S."/>
            <person name="Osmani S.A."/>
            <person name="Birren B.W."/>
        </authorList>
    </citation>
    <scope>NUCLEOTIDE SEQUENCE [LARGE SCALE GENOMIC DNA]</scope>
    <source>
        <strain>FGSC A4 / ATCC 38163 / CBS 112.46 / NRRL 194 / M139</strain>
    </source>
</reference>
<reference key="2">
    <citation type="journal article" date="2009" name="Fungal Genet. Biol.">
        <title>The 2008 update of the Aspergillus nidulans genome annotation: a community effort.</title>
        <authorList>
            <person name="Wortman J.R."/>
            <person name="Gilsenan J.M."/>
            <person name="Joardar V."/>
            <person name="Deegan J."/>
            <person name="Clutterbuck J."/>
            <person name="Andersen M.R."/>
            <person name="Archer D."/>
            <person name="Bencina M."/>
            <person name="Braus G."/>
            <person name="Coutinho P."/>
            <person name="von Dohren H."/>
            <person name="Doonan J."/>
            <person name="Driessen A.J."/>
            <person name="Durek P."/>
            <person name="Espeso E."/>
            <person name="Fekete E."/>
            <person name="Flipphi M."/>
            <person name="Estrada C.G."/>
            <person name="Geysens S."/>
            <person name="Goldman G."/>
            <person name="de Groot P.W."/>
            <person name="Hansen K."/>
            <person name="Harris S.D."/>
            <person name="Heinekamp T."/>
            <person name="Helmstaedt K."/>
            <person name="Henrissat B."/>
            <person name="Hofmann G."/>
            <person name="Homan T."/>
            <person name="Horio T."/>
            <person name="Horiuchi H."/>
            <person name="James S."/>
            <person name="Jones M."/>
            <person name="Karaffa L."/>
            <person name="Karanyi Z."/>
            <person name="Kato M."/>
            <person name="Keller N."/>
            <person name="Kelly D.E."/>
            <person name="Kiel J.A."/>
            <person name="Kim J.M."/>
            <person name="van der Klei I.J."/>
            <person name="Klis F.M."/>
            <person name="Kovalchuk A."/>
            <person name="Krasevec N."/>
            <person name="Kubicek C.P."/>
            <person name="Liu B."/>
            <person name="Maccabe A."/>
            <person name="Meyer V."/>
            <person name="Mirabito P."/>
            <person name="Miskei M."/>
            <person name="Mos M."/>
            <person name="Mullins J."/>
            <person name="Nelson D.R."/>
            <person name="Nielsen J."/>
            <person name="Oakley B.R."/>
            <person name="Osmani S.A."/>
            <person name="Pakula T."/>
            <person name="Paszewski A."/>
            <person name="Paulsen I."/>
            <person name="Pilsyk S."/>
            <person name="Pocsi I."/>
            <person name="Punt P.J."/>
            <person name="Ram A.F."/>
            <person name="Ren Q."/>
            <person name="Robellet X."/>
            <person name="Robson G."/>
            <person name="Seiboth B."/>
            <person name="van Solingen P."/>
            <person name="Specht T."/>
            <person name="Sun J."/>
            <person name="Taheri-Talesh N."/>
            <person name="Takeshita N."/>
            <person name="Ussery D."/>
            <person name="vanKuyk P.A."/>
            <person name="Visser H."/>
            <person name="van de Vondervoort P.J."/>
            <person name="de Vries R.P."/>
            <person name="Walton J."/>
            <person name="Xiang X."/>
            <person name="Xiong Y."/>
            <person name="Zeng A.P."/>
            <person name="Brandt B.W."/>
            <person name="Cornell M.J."/>
            <person name="van den Hondel C.A."/>
            <person name="Visser J."/>
            <person name="Oliver S.G."/>
            <person name="Turner G."/>
        </authorList>
    </citation>
    <scope>GENOME REANNOTATION</scope>
    <source>
        <strain>FGSC A4 / ATCC 38163 / CBS 112.46 / NRRL 194 / M139</strain>
    </source>
</reference>
<organism>
    <name type="scientific">Emericella nidulans (strain FGSC A4 / ATCC 38163 / CBS 112.46 / NRRL 194 / M139)</name>
    <name type="common">Aspergillus nidulans</name>
    <dbReference type="NCBI Taxonomy" id="227321"/>
    <lineage>
        <taxon>Eukaryota</taxon>
        <taxon>Fungi</taxon>
        <taxon>Dikarya</taxon>
        <taxon>Ascomycota</taxon>
        <taxon>Pezizomycotina</taxon>
        <taxon>Eurotiomycetes</taxon>
        <taxon>Eurotiomycetidae</taxon>
        <taxon>Eurotiales</taxon>
        <taxon>Aspergillaceae</taxon>
        <taxon>Aspergillus</taxon>
        <taxon>Aspergillus subgen. Nidulantes</taxon>
    </lineage>
</organism>
<feature type="chain" id="PRO_0000232178" description="ATP-dependent RNA helicase dbp3">
    <location>
        <begin position="1"/>
        <end position="488"/>
    </location>
</feature>
<feature type="domain" description="Helicase ATP-binding" evidence="2">
    <location>
        <begin position="104"/>
        <end position="279"/>
    </location>
</feature>
<feature type="domain" description="Helicase C-terminal" evidence="3">
    <location>
        <begin position="306"/>
        <end position="457"/>
    </location>
</feature>
<feature type="region of interest" description="Disordered" evidence="4">
    <location>
        <begin position="1"/>
        <end position="42"/>
    </location>
</feature>
<feature type="short sequence motif" description="Q motif">
    <location>
        <begin position="92"/>
        <end position="100"/>
    </location>
</feature>
<feature type="short sequence motif" description="DEAD box">
    <location>
        <begin position="226"/>
        <end position="229"/>
    </location>
</feature>
<feature type="compositionally biased region" description="Basic and acidic residues" evidence="4">
    <location>
        <begin position="1"/>
        <end position="29"/>
    </location>
</feature>
<feature type="binding site" evidence="2">
    <location>
        <begin position="117"/>
        <end position="124"/>
    </location>
    <ligand>
        <name>ATP</name>
        <dbReference type="ChEBI" id="CHEBI:30616"/>
    </ligand>
</feature>
<evidence type="ECO:0000250" key="1"/>
<evidence type="ECO:0000255" key="2">
    <source>
        <dbReference type="PROSITE-ProRule" id="PRU00541"/>
    </source>
</evidence>
<evidence type="ECO:0000255" key="3">
    <source>
        <dbReference type="PROSITE-ProRule" id="PRU00542"/>
    </source>
</evidence>
<evidence type="ECO:0000256" key="4">
    <source>
        <dbReference type="SAM" id="MobiDB-lite"/>
    </source>
</evidence>
<evidence type="ECO:0000305" key="5"/>
<protein>
    <recommendedName>
        <fullName>ATP-dependent RNA helicase dbp3</fullName>
        <ecNumber>3.6.4.13</ecNumber>
    </recommendedName>
</protein>
<name>DBP3_EMENI</name>
<sequence>MAKREHQDQTGDSRPSKKSKGTKDTKKNTEVSPPYFQSPALDNVPQTEIDKFLSDHSIKITDASADKPSLRPIISFSFLPPSNKDLYAPLDGFASPTAIQSATWPLLFAGRDVIGIAETGSGKTLAFGLPCLKKVLDLKTKQKSCRPLAVVISPTRELAMQIYDQLVKFAEKVDIQVACIFGGVKKDEQREALKSAAVVVATPGRLKDLQNDGSLDLGRVKYLVLDEADRMLDKGFEQDIKDIISPMPVSKRQTVMFTATWPPIVRNLASTFMTSPVTVTIGGDPSADPRANSRIKQVVEVVKPHEKEQRLVQILNRHQRGTPDKVLAFCLYKKEAMRVERLLRTKGFKVAGIHGDLSQQERFRSLEAFKSGAATVLVATDVAARGLDIPHVKLVVNVTFPLTVEDYVHRIGRTGRAGADGHAITLFTETDKAQSGALINVLKAANQEVPEALLKFGSTVKKKQHDAYGAFFKDVEPGKAATKIVFDD</sequence>
<dbReference type="EC" id="3.6.4.13"/>
<dbReference type="EMBL" id="AACD01000129">
    <property type="protein sequence ID" value="EAA62004.1"/>
    <property type="status" value="ALT_SEQ"/>
    <property type="molecule type" value="Genomic_DNA"/>
</dbReference>
<dbReference type="EMBL" id="BN001304">
    <property type="protein sequence ID" value="CBF79353.1"/>
    <property type="status" value="ALT_SEQ"/>
    <property type="molecule type" value="Genomic_DNA"/>
</dbReference>
<dbReference type="RefSeq" id="XP_680693.1">
    <property type="nucleotide sequence ID" value="XM_675601.1"/>
</dbReference>
<dbReference type="SMR" id="Q5AWA6"/>
<dbReference type="FunCoup" id="Q5AWA6">
    <property type="interactions" value="375"/>
</dbReference>
<dbReference type="STRING" id="227321.Q5AWA6"/>
<dbReference type="eggNOG" id="KOG0331">
    <property type="taxonomic scope" value="Eukaryota"/>
</dbReference>
<dbReference type="HOGENOM" id="CLU_003041_1_5_1"/>
<dbReference type="InParanoid" id="Q5AWA6"/>
<dbReference type="Proteomes" id="UP000000560">
    <property type="component" value="Chromosome IV"/>
</dbReference>
<dbReference type="GO" id="GO:0005730">
    <property type="term" value="C:nucleolus"/>
    <property type="evidence" value="ECO:0000318"/>
    <property type="project" value="GO_Central"/>
</dbReference>
<dbReference type="GO" id="GO:0005524">
    <property type="term" value="F:ATP binding"/>
    <property type="evidence" value="ECO:0007669"/>
    <property type="project" value="UniProtKB-KW"/>
</dbReference>
<dbReference type="GO" id="GO:0016887">
    <property type="term" value="F:ATP hydrolysis activity"/>
    <property type="evidence" value="ECO:0007669"/>
    <property type="project" value="RHEA"/>
</dbReference>
<dbReference type="GO" id="GO:0003729">
    <property type="term" value="F:mRNA binding"/>
    <property type="evidence" value="ECO:0000318"/>
    <property type="project" value="GO_Central"/>
</dbReference>
<dbReference type="GO" id="GO:0003724">
    <property type="term" value="F:RNA helicase activity"/>
    <property type="evidence" value="ECO:0000318"/>
    <property type="project" value="GO_Central"/>
</dbReference>
<dbReference type="GO" id="GO:0006364">
    <property type="term" value="P:rRNA processing"/>
    <property type="evidence" value="ECO:0000318"/>
    <property type="project" value="GO_Central"/>
</dbReference>
<dbReference type="CDD" id="cd00268">
    <property type="entry name" value="DEADc"/>
    <property type="match status" value="1"/>
</dbReference>
<dbReference type="CDD" id="cd18787">
    <property type="entry name" value="SF2_C_DEAD"/>
    <property type="match status" value="1"/>
</dbReference>
<dbReference type="FunFam" id="3.40.50.300:FF:000008">
    <property type="entry name" value="ATP-dependent RNA helicase RhlB"/>
    <property type="match status" value="1"/>
</dbReference>
<dbReference type="Gene3D" id="3.40.50.300">
    <property type="entry name" value="P-loop containing nucleotide triphosphate hydrolases"/>
    <property type="match status" value="2"/>
</dbReference>
<dbReference type="InterPro" id="IPR011545">
    <property type="entry name" value="DEAD/DEAH_box_helicase_dom"/>
</dbReference>
<dbReference type="InterPro" id="IPR014001">
    <property type="entry name" value="Helicase_ATP-bd"/>
</dbReference>
<dbReference type="InterPro" id="IPR001650">
    <property type="entry name" value="Helicase_C-like"/>
</dbReference>
<dbReference type="InterPro" id="IPR027417">
    <property type="entry name" value="P-loop_NTPase"/>
</dbReference>
<dbReference type="InterPro" id="IPR000629">
    <property type="entry name" value="RNA-helicase_DEAD-box_CS"/>
</dbReference>
<dbReference type="PANTHER" id="PTHR47958">
    <property type="entry name" value="ATP-DEPENDENT RNA HELICASE DBP3"/>
    <property type="match status" value="1"/>
</dbReference>
<dbReference type="Pfam" id="PF00270">
    <property type="entry name" value="DEAD"/>
    <property type="match status" value="1"/>
</dbReference>
<dbReference type="Pfam" id="PF00271">
    <property type="entry name" value="Helicase_C"/>
    <property type="match status" value="1"/>
</dbReference>
<dbReference type="SMART" id="SM00487">
    <property type="entry name" value="DEXDc"/>
    <property type="match status" value="1"/>
</dbReference>
<dbReference type="SMART" id="SM00490">
    <property type="entry name" value="HELICc"/>
    <property type="match status" value="1"/>
</dbReference>
<dbReference type="SUPFAM" id="SSF52540">
    <property type="entry name" value="P-loop containing nucleoside triphosphate hydrolases"/>
    <property type="match status" value="1"/>
</dbReference>
<dbReference type="PROSITE" id="PS00039">
    <property type="entry name" value="DEAD_ATP_HELICASE"/>
    <property type="match status" value="1"/>
</dbReference>
<dbReference type="PROSITE" id="PS51192">
    <property type="entry name" value="HELICASE_ATP_BIND_1"/>
    <property type="match status" value="1"/>
</dbReference>
<dbReference type="PROSITE" id="PS51194">
    <property type="entry name" value="HELICASE_CTER"/>
    <property type="match status" value="1"/>
</dbReference>
<gene>
    <name type="primary">dbp3</name>
    <name type="ORF">AN7424</name>
</gene>
<accession>Q5AWA6</accession>
<accession>C8VB96</accession>